<sequence length="232" mass="24319">MKKLLVASSASAALFAVGVGANAHAAEDNNVNQDQLAQTALNNTQQLNDAPVQEGAYNIAFDNSGYNFNFNSDGTNWSWSYNADSSAQQAPAQSTTQEQAPAAQQAPAQSTTQEQAPAAQQAPAQEQTQQPAQQPAQQQTQQPAQQSADSGSNVQVNDHLKAIAQRESGGDIHAINSSSGAAGKYQFLQTTWDSVAPAEYQGKPASEAPEAVQDAAAQKLYDTAGPSQWVTA</sequence>
<name>SCED_STACT</name>
<evidence type="ECO:0000250" key="1"/>
<evidence type="ECO:0000255" key="2"/>
<evidence type="ECO:0000256" key="3">
    <source>
        <dbReference type="SAM" id="MobiDB-lite"/>
    </source>
</evidence>
<evidence type="ECO:0000305" key="4"/>
<keyword id="KW-0326">Glycosidase</keyword>
<keyword id="KW-0378">Hydrolase</keyword>
<keyword id="KW-1185">Reference proteome</keyword>
<keyword id="KW-0964">Secreted</keyword>
<keyword id="KW-0732">Signal</keyword>
<feature type="signal peptide" evidence="2">
    <location>
        <begin position="1"/>
        <end position="25"/>
    </location>
</feature>
<feature type="chain" id="PRO_5000055436" description="Probable transglycosylase SceD">
    <location>
        <begin position="26"/>
        <end position="232"/>
    </location>
</feature>
<feature type="region of interest" description="Disordered" evidence="3">
    <location>
        <begin position="84"/>
        <end position="154"/>
    </location>
</feature>
<feature type="compositionally biased region" description="Low complexity" evidence="3">
    <location>
        <begin position="87"/>
        <end position="148"/>
    </location>
</feature>
<proteinExistence type="inferred from homology"/>
<organism>
    <name type="scientific">Staphylococcus carnosus (strain TM300)</name>
    <dbReference type="NCBI Taxonomy" id="396513"/>
    <lineage>
        <taxon>Bacteria</taxon>
        <taxon>Bacillati</taxon>
        <taxon>Bacillota</taxon>
        <taxon>Bacilli</taxon>
        <taxon>Bacillales</taxon>
        <taxon>Staphylococcaceae</taxon>
        <taxon>Staphylococcus</taxon>
    </lineage>
</organism>
<accession>O54493</accession>
<accession>B9DMG2</accession>
<dbReference type="EC" id="3.2.-.-"/>
<dbReference type="EMBL" id="AF109218">
    <property type="protein sequence ID" value="AAB94657.1"/>
    <property type="molecule type" value="Genomic_DNA"/>
</dbReference>
<dbReference type="EMBL" id="AM295250">
    <property type="protein sequence ID" value="CAL28505.1"/>
    <property type="molecule type" value="Genomic_DNA"/>
</dbReference>
<dbReference type="RefSeq" id="WP_015900845.1">
    <property type="nucleotide sequence ID" value="NC_012121.1"/>
</dbReference>
<dbReference type="SMR" id="O54493"/>
<dbReference type="GeneID" id="93794053"/>
<dbReference type="KEGG" id="sca:SCA_1599"/>
<dbReference type="eggNOG" id="COG1388">
    <property type="taxonomic scope" value="Bacteria"/>
</dbReference>
<dbReference type="HOGENOM" id="CLU_099865_0_0_9"/>
<dbReference type="OrthoDB" id="2314263at2"/>
<dbReference type="BioCyc" id="SCAR396513:SCA_RS08120-MONOMER"/>
<dbReference type="Proteomes" id="UP000000444">
    <property type="component" value="Chromosome"/>
</dbReference>
<dbReference type="GO" id="GO:0005576">
    <property type="term" value="C:extracellular region"/>
    <property type="evidence" value="ECO:0007669"/>
    <property type="project" value="UniProtKB-SubCell"/>
</dbReference>
<dbReference type="GO" id="GO:0016798">
    <property type="term" value="F:hydrolase activity, acting on glycosyl bonds"/>
    <property type="evidence" value="ECO:0007669"/>
    <property type="project" value="UniProtKB-KW"/>
</dbReference>
<dbReference type="CDD" id="cd13925">
    <property type="entry name" value="RPF"/>
    <property type="match status" value="1"/>
</dbReference>
<dbReference type="Gene3D" id="1.10.530.10">
    <property type="match status" value="1"/>
</dbReference>
<dbReference type="InterPro" id="IPR023346">
    <property type="entry name" value="Lysozyme-like_dom_sf"/>
</dbReference>
<dbReference type="InterPro" id="IPR010618">
    <property type="entry name" value="RPF"/>
</dbReference>
<dbReference type="Pfam" id="PF06737">
    <property type="entry name" value="Transglycosylas"/>
    <property type="match status" value="1"/>
</dbReference>
<dbReference type="SUPFAM" id="SSF53955">
    <property type="entry name" value="Lysozyme-like"/>
    <property type="match status" value="1"/>
</dbReference>
<protein>
    <recommendedName>
        <fullName>Probable transglycosylase SceD</fullName>
        <ecNumber>3.2.-.-</ecNumber>
    </recommendedName>
</protein>
<gene>
    <name type="primary">sceD</name>
    <name type="ordered locus">Sca_1599</name>
</gene>
<reference key="1">
    <citation type="submission" date="1998-11" db="EMBL/GenBank/DDBJ databases">
        <title>Identification of an operon involved in thiamin biosynthesis in Staphylococcus carnosus TM300.</title>
        <authorList>
            <person name="Krismer B."/>
            <person name="Goetz F."/>
        </authorList>
    </citation>
    <scope>NUCLEOTIDE SEQUENCE [GENOMIC DNA]</scope>
</reference>
<reference key="2">
    <citation type="journal article" date="2009" name="Appl. Environ. Microbiol.">
        <title>Genome analysis of the meat starter culture bacterium Staphylococcus carnosus TM300.</title>
        <authorList>
            <person name="Rosenstein R."/>
            <person name="Nerz C."/>
            <person name="Biswas L."/>
            <person name="Resch A."/>
            <person name="Raddatz G."/>
            <person name="Schuster S.C."/>
            <person name="Goetz F."/>
        </authorList>
    </citation>
    <scope>NUCLEOTIDE SEQUENCE [LARGE SCALE GENOMIC DNA]</scope>
    <source>
        <strain>TM300</strain>
    </source>
</reference>
<comment type="function">
    <text evidence="1">Is able to cleave peptidoglycan and affects clumping and separation of bacterial cells.</text>
</comment>
<comment type="subcellular location">
    <subcellularLocation>
        <location evidence="1">Secreted</location>
    </subcellularLocation>
</comment>
<comment type="similarity">
    <text evidence="4">Belongs to the transglycosylase family. SceD subfamily.</text>
</comment>